<organism>
    <name type="scientific">Leptospira interrogans serogroup Icterohaemorrhagiae serovar copenhageni (strain Fiocruz L1-130)</name>
    <dbReference type="NCBI Taxonomy" id="267671"/>
    <lineage>
        <taxon>Bacteria</taxon>
        <taxon>Pseudomonadati</taxon>
        <taxon>Spirochaetota</taxon>
        <taxon>Spirochaetia</taxon>
        <taxon>Leptospirales</taxon>
        <taxon>Leptospiraceae</taxon>
        <taxon>Leptospira</taxon>
    </lineage>
</organism>
<keyword id="KW-0028">Amino-acid biosynthesis</keyword>
<keyword id="KW-0057">Aromatic amino acid biosynthesis</keyword>
<keyword id="KW-0328">Glycosyltransferase</keyword>
<keyword id="KW-0460">Magnesium</keyword>
<keyword id="KW-0479">Metal-binding</keyword>
<keyword id="KW-0808">Transferase</keyword>
<keyword id="KW-0822">Tryptophan biosynthesis</keyword>
<evidence type="ECO:0000255" key="1">
    <source>
        <dbReference type="HAMAP-Rule" id="MF_00211"/>
    </source>
</evidence>
<sequence length="336" mass="36902">MEPRAAVLKLIEHKHLTALEAESFMNHVMKGEVSEILLSSFLTAMRFNGESVEEVLGCTLALRKNALRPKTVFPFDLLDTCGTGGDGQGTINISTLSAIVLASLGIKVAKHGNRSVSSHTGSSDILTRLGYQTETTQEEVEAHLVNRGFTFLFAPMWHPSMKHAGPVRKELGFRTVFNMIGPLSNPFSPQFQIIGVYQPELMELFIKVLQSLGLKRALVCHSRDGLDEFSIFQITDYTFLENGVISRHSFDPKILGLSSLNKEEVYASSSDHAEVLARKVLNSESIAGTHAVALNAGAGLFVMGKIDTIEQGYQIAKEAILSGKTKKYFEDLISKE</sequence>
<gene>
    <name evidence="1" type="primary">trpD</name>
    <name type="ordered locus">LIC_12541</name>
</gene>
<proteinExistence type="inferred from homology"/>
<protein>
    <recommendedName>
        <fullName evidence="1">Anthranilate phosphoribosyltransferase</fullName>
        <ecNumber evidence="1">2.4.2.18</ecNumber>
    </recommendedName>
</protein>
<comment type="function">
    <text evidence="1">Catalyzes the transfer of the phosphoribosyl group of 5-phosphorylribose-1-pyrophosphate (PRPP) to anthranilate to yield N-(5'-phosphoribosyl)-anthranilate (PRA).</text>
</comment>
<comment type="catalytic activity">
    <reaction evidence="1">
        <text>N-(5-phospho-beta-D-ribosyl)anthranilate + diphosphate = 5-phospho-alpha-D-ribose 1-diphosphate + anthranilate</text>
        <dbReference type="Rhea" id="RHEA:11768"/>
        <dbReference type="ChEBI" id="CHEBI:16567"/>
        <dbReference type="ChEBI" id="CHEBI:18277"/>
        <dbReference type="ChEBI" id="CHEBI:33019"/>
        <dbReference type="ChEBI" id="CHEBI:58017"/>
        <dbReference type="EC" id="2.4.2.18"/>
    </reaction>
</comment>
<comment type="cofactor">
    <cofactor evidence="1">
        <name>Mg(2+)</name>
        <dbReference type="ChEBI" id="CHEBI:18420"/>
    </cofactor>
    <text evidence="1">Binds 2 magnesium ions per monomer.</text>
</comment>
<comment type="pathway">
    <text evidence="1">Amino-acid biosynthesis; L-tryptophan biosynthesis; L-tryptophan from chorismate: step 2/5.</text>
</comment>
<comment type="subunit">
    <text evidence="1">Homodimer.</text>
</comment>
<comment type="similarity">
    <text evidence="1">Belongs to the anthranilate phosphoribosyltransferase family.</text>
</comment>
<reference key="1">
    <citation type="journal article" date="2004" name="J. Bacteriol.">
        <title>Comparative genomics of two Leptospira interrogans serovars reveals novel insights into physiology and pathogenesis.</title>
        <authorList>
            <person name="Nascimento A.L.T.O."/>
            <person name="Ko A.I."/>
            <person name="Martins E.A.L."/>
            <person name="Monteiro-Vitorello C.B."/>
            <person name="Ho P.L."/>
            <person name="Haake D.A."/>
            <person name="Verjovski-Almeida S."/>
            <person name="Hartskeerl R.A."/>
            <person name="Marques M.V."/>
            <person name="Oliveira M.C."/>
            <person name="Menck C.F.M."/>
            <person name="Leite L.C.C."/>
            <person name="Carrer H."/>
            <person name="Coutinho L.L."/>
            <person name="Degrave W.M."/>
            <person name="Dellagostin O.A."/>
            <person name="El-Dorry H."/>
            <person name="Ferro E.S."/>
            <person name="Ferro M.I.T."/>
            <person name="Furlan L.R."/>
            <person name="Gamberini M."/>
            <person name="Giglioti E.A."/>
            <person name="Goes-Neto A."/>
            <person name="Goldman G.H."/>
            <person name="Goldman M.H.S."/>
            <person name="Harakava R."/>
            <person name="Jeronimo S.M.B."/>
            <person name="Junqueira-de-Azevedo I.L.M."/>
            <person name="Kimura E.T."/>
            <person name="Kuramae E.E."/>
            <person name="Lemos E.G.M."/>
            <person name="Lemos M.V.F."/>
            <person name="Marino C.L."/>
            <person name="Nunes L.R."/>
            <person name="de Oliveira R.C."/>
            <person name="Pereira G.G."/>
            <person name="Reis M.S."/>
            <person name="Schriefer A."/>
            <person name="Siqueira W.J."/>
            <person name="Sommer P."/>
            <person name="Tsai S.M."/>
            <person name="Simpson A.J.G."/>
            <person name="Ferro J.A."/>
            <person name="Camargo L.E.A."/>
            <person name="Kitajima J.P."/>
            <person name="Setubal J.C."/>
            <person name="Van Sluys M.A."/>
        </authorList>
    </citation>
    <scope>NUCLEOTIDE SEQUENCE [LARGE SCALE GENOMIC DNA]</scope>
    <source>
        <strain>Fiocruz L1-130</strain>
    </source>
</reference>
<accession>Q72PD0</accession>
<dbReference type="EC" id="2.4.2.18" evidence="1"/>
<dbReference type="EMBL" id="AE016823">
    <property type="protein sequence ID" value="AAS71106.1"/>
    <property type="molecule type" value="Genomic_DNA"/>
</dbReference>
<dbReference type="RefSeq" id="WP_000433680.1">
    <property type="nucleotide sequence ID" value="NC_005823.1"/>
</dbReference>
<dbReference type="SMR" id="Q72PD0"/>
<dbReference type="GeneID" id="61142418"/>
<dbReference type="KEGG" id="lic:LIC_12541"/>
<dbReference type="HOGENOM" id="CLU_034315_2_1_12"/>
<dbReference type="UniPathway" id="UPA00035">
    <property type="reaction ID" value="UER00041"/>
</dbReference>
<dbReference type="Proteomes" id="UP000007037">
    <property type="component" value="Chromosome I"/>
</dbReference>
<dbReference type="GO" id="GO:0005829">
    <property type="term" value="C:cytosol"/>
    <property type="evidence" value="ECO:0007669"/>
    <property type="project" value="TreeGrafter"/>
</dbReference>
<dbReference type="GO" id="GO:0004048">
    <property type="term" value="F:anthranilate phosphoribosyltransferase activity"/>
    <property type="evidence" value="ECO:0007669"/>
    <property type="project" value="UniProtKB-UniRule"/>
</dbReference>
<dbReference type="GO" id="GO:0000287">
    <property type="term" value="F:magnesium ion binding"/>
    <property type="evidence" value="ECO:0007669"/>
    <property type="project" value="UniProtKB-UniRule"/>
</dbReference>
<dbReference type="GO" id="GO:0000162">
    <property type="term" value="P:L-tryptophan biosynthetic process"/>
    <property type="evidence" value="ECO:0007669"/>
    <property type="project" value="UniProtKB-UniRule"/>
</dbReference>
<dbReference type="FunFam" id="3.40.1030.10:FF:000002">
    <property type="entry name" value="Anthranilate phosphoribosyltransferase"/>
    <property type="match status" value="1"/>
</dbReference>
<dbReference type="Gene3D" id="3.40.1030.10">
    <property type="entry name" value="Nucleoside phosphorylase/phosphoribosyltransferase catalytic domain"/>
    <property type="match status" value="1"/>
</dbReference>
<dbReference type="Gene3D" id="1.20.970.10">
    <property type="entry name" value="Transferase, Pyrimidine Nucleoside Phosphorylase, Chain C"/>
    <property type="match status" value="1"/>
</dbReference>
<dbReference type="HAMAP" id="MF_00211">
    <property type="entry name" value="TrpD"/>
    <property type="match status" value="1"/>
</dbReference>
<dbReference type="InterPro" id="IPR005940">
    <property type="entry name" value="Anthranilate_Pribosyl_Tfrase"/>
</dbReference>
<dbReference type="InterPro" id="IPR000312">
    <property type="entry name" value="Glycosyl_Trfase_fam3"/>
</dbReference>
<dbReference type="InterPro" id="IPR017459">
    <property type="entry name" value="Glycosyl_Trfase_fam3_N_dom"/>
</dbReference>
<dbReference type="InterPro" id="IPR036320">
    <property type="entry name" value="Glycosyl_Trfase_fam3_N_dom_sf"/>
</dbReference>
<dbReference type="InterPro" id="IPR035902">
    <property type="entry name" value="Nuc_phospho_transferase"/>
</dbReference>
<dbReference type="NCBIfam" id="TIGR01245">
    <property type="entry name" value="trpD"/>
    <property type="match status" value="1"/>
</dbReference>
<dbReference type="PANTHER" id="PTHR43285">
    <property type="entry name" value="ANTHRANILATE PHOSPHORIBOSYLTRANSFERASE"/>
    <property type="match status" value="1"/>
</dbReference>
<dbReference type="PANTHER" id="PTHR43285:SF2">
    <property type="entry name" value="ANTHRANILATE PHOSPHORIBOSYLTRANSFERASE"/>
    <property type="match status" value="1"/>
</dbReference>
<dbReference type="Pfam" id="PF02885">
    <property type="entry name" value="Glycos_trans_3N"/>
    <property type="match status" value="1"/>
</dbReference>
<dbReference type="Pfam" id="PF00591">
    <property type="entry name" value="Glycos_transf_3"/>
    <property type="match status" value="1"/>
</dbReference>
<dbReference type="SUPFAM" id="SSF52418">
    <property type="entry name" value="Nucleoside phosphorylase/phosphoribosyltransferase catalytic domain"/>
    <property type="match status" value="1"/>
</dbReference>
<dbReference type="SUPFAM" id="SSF47648">
    <property type="entry name" value="Nucleoside phosphorylase/phosphoribosyltransferase N-terminal domain"/>
    <property type="match status" value="1"/>
</dbReference>
<name>TRPD_LEPIC</name>
<feature type="chain" id="PRO_0000154455" description="Anthranilate phosphoribosyltransferase">
    <location>
        <begin position="1"/>
        <end position="336"/>
    </location>
</feature>
<feature type="binding site" evidence="1">
    <location>
        <position position="82"/>
    </location>
    <ligand>
        <name>5-phospho-alpha-D-ribose 1-diphosphate</name>
        <dbReference type="ChEBI" id="CHEBI:58017"/>
    </ligand>
</feature>
<feature type="binding site" evidence="1">
    <location>
        <position position="82"/>
    </location>
    <ligand>
        <name>anthranilate</name>
        <dbReference type="ChEBI" id="CHEBI:16567"/>
        <label>1</label>
    </ligand>
</feature>
<feature type="binding site" evidence="1">
    <location>
        <begin position="85"/>
        <end position="86"/>
    </location>
    <ligand>
        <name>5-phospho-alpha-D-ribose 1-diphosphate</name>
        <dbReference type="ChEBI" id="CHEBI:58017"/>
    </ligand>
</feature>
<feature type="binding site" evidence="1">
    <location>
        <position position="90"/>
    </location>
    <ligand>
        <name>5-phospho-alpha-D-ribose 1-diphosphate</name>
        <dbReference type="ChEBI" id="CHEBI:58017"/>
    </ligand>
</feature>
<feature type="binding site" evidence="1">
    <location>
        <begin position="92"/>
        <end position="95"/>
    </location>
    <ligand>
        <name>5-phospho-alpha-D-ribose 1-diphosphate</name>
        <dbReference type="ChEBI" id="CHEBI:58017"/>
    </ligand>
</feature>
<feature type="binding site" evidence="1">
    <location>
        <position position="94"/>
    </location>
    <ligand>
        <name>Mg(2+)</name>
        <dbReference type="ChEBI" id="CHEBI:18420"/>
        <label>1</label>
    </ligand>
</feature>
<feature type="binding site" evidence="1">
    <location>
        <begin position="110"/>
        <end position="118"/>
    </location>
    <ligand>
        <name>5-phospho-alpha-D-ribose 1-diphosphate</name>
        <dbReference type="ChEBI" id="CHEBI:58017"/>
    </ligand>
</feature>
<feature type="binding site" evidence="1">
    <location>
        <position position="113"/>
    </location>
    <ligand>
        <name>anthranilate</name>
        <dbReference type="ChEBI" id="CHEBI:16567"/>
        <label>1</label>
    </ligand>
</feature>
<feature type="binding site" evidence="1">
    <location>
        <position position="122"/>
    </location>
    <ligand>
        <name>5-phospho-alpha-D-ribose 1-diphosphate</name>
        <dbReference type="ChEBI" id="CHEBI:58017"/>
    </ligand>
</feature>
<feature type="binding site" evidence="1">
    <location>
        <position position="168"/>
    </location>
    <ligand>
        <name>anthranilate</name>
        <dbReference type="ChEBI" id="CHEBI:16567"/>
        <label>2</label>
    </ligand>
</feature>
<feature type="binding site" evidence="1">
    <location>
        <position position="227"/>
    </location>
    <ligand>
        <name>Mg(2+)</name>
        <dbReference type="ChEBI" id="CHEBI:18420"/>
        <label>2</label>
    </ligand>
</feature>
<feature type="binding site" evidence="1">
    <location>
        <position position="228"/>
    </location>
    <ligand>
        <name>Mg(2+)</name>
        <dbReference type="ChEBI" id="CHEBI:18420"/>
        <label>1</label>
    </ligand>
</feature>
<feature type="binding site" evidence="1">
    <location>
        <position position="228"/>
    </location>
    <ligand>
        <name>Mg(2+)</name>
        <dbReference type="ChEBI" id="CHEBI:18420"/>
        <label>2</label>
    </ligand>
</feature>